<proteinExistence type="evidence at protein level"/>
<comment type="function">
    <text evidence="1 2">RNA N6-methyltransferase that mediates N6-methylation of adenine of U6 small nuclear RNA (U6 snRNA).</text>
</comment>
<comment type="catalytic activity">
    <reaction evidence="1 2">
        <text>adenosine in U6 snRNA + S-adenosyl-L-methionine = N(6)-methyladenosine in U6 snRNA + S-adenosyl-L-homocysteine + H(+)</text>
        <dbReference type="Rhea" id="RHEA:52808"/>
        <dbReference type="Rhea" id="RHEA-COMP:13573"/>
        <dbReference type="Rhea" id="RHEA-COMP:13574"/>
        <dbReference type="ChEBI" id="CHEBI:15378"/>
        <dbReference type="ChEBI" id="CHEBI:57856"/>
        <dbReference type="ChEBI" id="CHEBI:59789"/>
        <dbReference type="ChEBI" id="CHEBI:74411"/>
        <dbReference type="ChEBI" id="CHEBI:74449"/>
        <dbReference type="EC" id="2.1.1.346"/>
    </reaction>
</comment>
<comment type="interaction">
    <interactant intactId="EBI-26753280">
        <id>Q7K3B9</id>
    </interactant>
    <interactant intactId="EBI-1629458">
        <id>Q9VNH1</id>
        <label>CG1239</label>
    </interactant>
    <organismsDiffer>false</organismsDiffer>
    <experiments>3</experiments>
</comment>
<comment type="similarity">
    <text evidence="4">Belongs to the methyltransferase superfamily. METTL16/RlmF family.</text>
</comment>
<accession>Q7K3B9</accession>
<gene>
    <name type="ORF">CG7544</name>
</gene>
<name>MET16_DROME</name>
<sequence>MVKTKGNQKIVGMHPRNVLRTQPDYTKMAIKYKDFRQQCQLELNGKVSVNFRNEKTLRELTKMLLKEYYDLDVDFAPGSLVPTLALRLNYILWLEDLMEPLNLQNIRGIDIGCGSSCIYSLLGAKKNGWHMLALESKPQNIEYAKENVKRNHMESLIEVYAQPDNTNIFKSYFEQDQQQLQYQFCLCNPPFFDSNLPNPLGGNTRNPERRPAPNNARTGSQEELTCVGGEVQFVQRIIDESLENKERVRIFTTMLGVKANVPRILDYLKELQVANVSTTEFHQGHTTRWAVAWSFHSEPLQQGTT</sequence>
<evidence type="ECO:0000250" key="1">
    <source>
        <dbReference type="UniProtKB" id="O42662"/>
    </source>
</evidence>
<evidence type="ECO:0000250" key="2">
    <source>
        <dbReference type="UniProtKB" id="Q86W50"/>
    </source>
</evidence>
<evidence type="ECO:0000256" key="3">
    <source>
        <dbReference type="SAM" id="MobiDB-lite"/>
    </source>
</evidence>
<evidence type="ECO:0000305" key="4"/>
<feature type="chain" id="PRO_0000310773" description="U6 small nuclear RNA (adenine-(43)-N(6))-methyltransferase">
    <location>
        <begin position="1"/>
        <end position="305"/>
    </location>
</feature>
<feature type="region of interest" description="Disordered" evidence="3">
    <location>
        <begin position="197"/>
        <end position="221"/>
    </location>
</feature>
<feature type="binding site" evidence="2">
    <location>
        <position position="87"/>
    </location>
    <ligand>
        <name>S-adenosyl-L-methionine</name>
        <dbReference type="ChEBI" id="CHEBI:59789"/>
    </ligand>
</feature>
<feature type="binding site" evidence="2">
    <location>
        <position position="112"/>
    </location>
    <ligand>
        <name>S-adenosyl-L-methionine</name>
        <dbReference type="ChEBI" id="CHEBI:59789"/>
    </ligand>
</feature>
<feature type="binding site" evidence="2">
    <location>
        <position position="135"/>
    </location>
    <ligand>
        <name>S-adenosyl-L-methionine</name>
        <dbReference type="ChEBI" id="CHEBI:59789"/>
    </ligand>
</feature>
<feature type="binding site" evidence="2">
    <location>
        <position position="166"/>
    </location>
    <ligand>
        <name>S-adenosyl-L-methionine</name>
        <dbReference type="ChEBI" id="CHEBI:59789"/>
    </ligand>
</feature>
<feature type="binding site" evidence="2">
    <location>
        <position position="188"/>
    </location>
    <ligand>
        <name>S-adenosyl-L-methionine</name>
        <dbReference type="ChEBI" id="CHEBI:59789"/>
    </ligand>
</feature>
<dbReference type="EC" id="2.1.1.346" evidence="1 2"/>
<dbReference type="EMBL" id="AE013599">
    <property type="protein sequence ID" value="AAF58169.2"/>
    <property type="molecule type" value="Genomic_DNA"/>
</dbReference>
<dbReference type="EMBL" id="AY058680">
    <property type="protein sequence ID" value="AAL13909.1"/>
    <property type="molecule type" value="mRNA"/>
</dbReference>
<dbReference type="RefSeq" id="NP_001163156.1">
    <property type="nucleotide sequence ID" value="NM_001169685.2"/>
</dbReference>
<dbReference type="RefSeq" id="NP_611015.1">
    <property type="nucleotide sequence ID" value="NM_137171.4"/>
</dbReference>
<dbReference type="SMR" id="Q7K3B9"/>
<dbReference type="BioGRID" id="62420">
    <property type="interactions" value="1"/>
</dbReference>
<dbReference type="FunCoup" id="Q7K3B9">
    <property type="interactions" value="2407"/>
</dbReference>
<dbReference type="IntAct" id="Q7K3B9">
    <property type="interactions" value="2"/>
</dbReference>
<dbReference type="STRING" id="7227.FBpp0289552"/>
<dbReference type="PaxDb" id="7227-FBpp0086548"/>
<dbReference type="DNASU" id="36680"/>
<dbReference type="EnsemblMetazoa" id="FBtr0087417">
    <property type="protein sequence ID" value="FBpp0086548"/>
    <property type="gene ID" value="FBgn0033994"/>
</dbReference>
<dbReference type="EnsemblMetazoa" id="FBtr0300324">
    <property type="protein sequence ID" value="FBpp0289552"/>
    <property type="gene ID" value="FBgn0033994"/>
</dbReference>
<dbReference type="GeneID" id="36680"/>
<dbReference type="KEGG" id="dme:Dmel_CG7544"/>
<dbReference type="UCSC" id="CG7544-RA">
    <property type="organism name" value="d. melanogaster"/>
</dbReference>
<dbReference type="AGR" id="FB:FBgn0033994"/>
<dbReference type="FlyBase" id="FBgn0033994">
    <property type="gene designation" value="CG7544"/>
</dbReference>
<dbReference type="VEuPathDB" id="VectorBase:FBgn0033994"/>
<dbReference type="eggNOG" id="KOG2912">
    <property type="taxonomic scope" value="Eukaryota"/>
</dbReference>
<dbReference type="GeneTree" id="ENSGT00390000016694"/>
<dbReference type="HOGENOM" id="CLU_027534_3_0_1"/>
<dbReference type="InParanoid" id="Q7K3B9"/>
<dbReference type="OMA" id="HQGRYDF"/>
<dbReference type="OrthoDB" id="514248at2759"/>
<dbReference type="PhylomeDB" id="Q7K3B9"/>
<dbReference type="BioGRID-ORCS" id="36680">
    <property type="hits" value="0 hits in 1 CRISPR screen"/>
</dbReference>
<dbReference type="GenomeRNAi" id="36680"/>
<dbReference type="PRO" id="PR:Q7K3B9"/>
<dbReference type="Proteomes" id="UP000000803">
    <property type="component" value="Chromosome 2R"/>
</dbReference>
<dbReference type="Bgee" id="FBgn0033994">
    <property type="expression patterns" value="Expressed in adult differentiating enterocyte in digestive tract and 28 other cell types or tissues"/>
</dbReference>
<dbReference type="ExpressionAtlas" id="Q7K3B9">
    <property type="expression patterns" value="baseline and differential"/>
</dbReference>
<dbReference type="GO" id="GO:0005634">
    <property type="term" value="C:nucleus"/>
    <property type="evidence" value="ECO:0000318"/>
    <property type="project" value="GO_Central"/>
</dbReference>
<dbReference type="GO" id="GO:0001734">
    <property type="term" value="F:mRNA m(6)A methyltransferase activity"/>
    <property type="evidence" value="ECO:0000250"/>
    <property type="project" value="FlyBase"/>
</dbReference>
<dbReference type="GO" id="GO:0003676">
    <property type="term" value="F:nucleic acid binding"/>
    <property type="evidence" value="ECO:0007669"/>
    <property type="project" value="InterPro"/>
</dbReference>
<dbReference type="GO" id="GO:0120048">
    <property type="term" value="F:U6 snRNA (adenine-(43)-N(6))-methyltransferase activity"/>
    <property type="evidence" value="ECO:0000250"/>
    <property type="project" value="FlyBase"/>
</dbReference>
<dbReference type="GO" id="GO:0070475">
    <property type="term" value="P:rRNA base methylation"/>
    <property type="evidence" value="ECO:0000318"/>
    <property type="project" value="GO_Central"/>
</dbReference>
<dbReference type="FunFam" id="3.40.50.150:FF:000388">
    <property type="entry name" value="U6 small nuclear RNA (adenine-(43)-N(6))-methyltransferase"/>
    <property type="match status" value="1"/>
</dbReference>
<dbReference type="Gene3D" id="3.40.50.150">
    <property type="entry name" value="Vaccinia Virus protein VP39"/>
    <property type="match status" value="1"/>
</dbReference>
<dbReference type="InterPro" id="IPR002052">
    <property type="entry name" value="DNA_methylase_N6_adenine_CS"/>
</dbReference>
<dbReference type="InterPro" id="IPR017182">
    <property type="entry name" value="METTL16/PsiM"/>
</dbReference>
<dbReference type="InterPro" id="IPR010286">
    <property type="entry name" value="METTL16/RlmF"/>
</dbReference>
<dbReference type="InterPro" id="IPR029063">
    <property type="entry name" value="SAM-dependent_MTases_sf"/>
</dbReference>
<dbReference type="PANTHER" id="PTHR13393:SF0">
    <property type="entry name" value="RNA N6-ADENOSINE-METHYLTRANSFERASE METTL16"/>
    <property type="match status" value="1"/>
</dbReference>
<dbReference type="PANTHER" id="PTHR13393">
    <property type="entry name" value="SAM-DEPENDENT METHYLTRANSFERASE"/>
    <property type="match status" value="1"/>
</dbReference>
<dbReference type="Pfam" id="PF05971">
    <property type="entry name" value="Methyltransf_10"/>
    <property type="match status" value="1"/>
</dbReference>
<dbReference type="PIRSF" id="PIRSF037350">
    <property type="entry name" value="Mtase_ZK1128_prd"/>
    <property type="match status" value="1"/>
</dbReference>
<dbReference type="SUPFAM" id="SSF53335">
    <property type="entry name" value="S-adenosyl-L-methionine-dependent methyltransferases"/>
    <property type="match status" value="1"/>
</dbReference>
<keyword id="KW-0489">Methyltransferase</keyword>
<keyword id="KW-1185">Reference proteome</keyword>
<keyword id="KW-0949">S-adenosyl-L-methionine</keyword>
<keyword id="KW-0808">Transferase</keyword>
<organism>
    <name type="scientific">Drosophila melanogaster</name>
    <name type="common">Fruit fly</name>
    <dbReference type="NCBI Taxonomy" id="7227"/>
    <lineage>
        <taxon>Eukaryota</taxon>
        <taxon>Metazoa</taxon>
        <taxon>Ecdysozoa</taxon>
        <taxon>Arthropoda</taxon>
        <taxon>Hexapoda</taxon>
        <taxon>Insecta</taxon>
        <taxon>Pterygota</taxon>
        <taxon>Neoptera</taxon>
        <taxon>Endopterygota</taxon>
        <taxon>Diptera</taxon>
        <taxon>Brachycera</taxon>
        <taxon>Muscomorpha</taxon>
        <taxon>Ephydroidea</taxon>
        <taxon>Drosophilidae</taxon>
        <taxon>Drosophila</taxon>
        <taxon>Sophophora</taxon>
    </lineage>
</organism>
<reference key="1">
    <citation type="journal article" date="2000" name="Science">
        <title>The genome sequence of Drosophila melanogaster.</title>
        <authorList>
            <person name="Adams M.D."/>
            <person name="Celniker S.E."/>
            <person name="Holt R.A."/>
            <person name="Evans C.A."/>
            <person name="Gocayne J.D."/>
            <person name="Amanatides P.G."/>
            <person name="Scherer S.E."/>
            <person name="Li P.W."/>
            <person name="Hoskins R.A."/>
            <person name="Galle R.F."/>
            <person name="George R.A."/>
            <person name="Lewis S.E."/>
            <person name="Richards S."/>
            <person name="Ashburner M."/>
            <person name="Henderson S.N."/>
            <person name="Sutton G.G."/>
            <person name="Wortman J.R."/>
            <person name="Yandell M.D."/>
            <person name="Zhang Q."/>
            <person name="Chen L.X."/>
            <person name="Brandon R.C."/>
            <person name="Rogers Y.-H.C."/>
            <person name="Blazej R.G."/>
            <person name="Champe M."/>
            <person name="Pfeiffer B.D."/>
            <person name="Wan K.H."/>
            <person name="Doyle C."/>
            <person name="Baxter E.G."/>
            <person name="Helt G."/>
            <person name="Nelson C.R."/>
            <person name="Miklos G.L.G."/>
            <person name="Abril J.F."/>
            <person name="Agbayani A."/>
            <person name="An H.-J."/>
            <person name="Andrews-Pfannkoch C."/>
            <person name="Baldwin D."/>
            <person name="Ballew R.M."/>
            <person name="Basu A."/>
            <person name="Baxendale J."/>
            <person name="Bayraktaroglu L."/>
            <person name="Beasley E.M."/>
            <person name="Beeson K.Y."/>
            <person name="Benos P.V."/>
            <person name="Berman B.P."/>
            <person name="Bhandari D."/>
            <person name="Bolshakov S."/>
            <person name="Borkova D."/>
            <person name="Botchan M.R."/>
            <person name="Bouck J."/>
            <person name="Brokstein P."/>
            <person name="Brottier P."/>
            <person name="Burtis K.C."/>
            <person name="Busam D.A."/>
            <person name="Butler H."/>
            <person name="Cadieu E."/>
            <person name="Center A."/>
            <person name="Chandra I."/>
            <person name="Cherry J.M."/>
            <person name="Cawley S."/>
            <person name="Dahlke C."/>
            <person name="Davenport L.B."/>
            <person name="Davies P."/>
            <person name="de Pablos B."/>
            <person name="Delcher A."/>
            <person name="Deng Z."/>
            <person name="Mays A.D."/>
            <person name="Dew I."/>
            <person name="Dietz S.M."/>
            <person name="Dodson K."/>
            <person name="Doup L.E."/>
            <person name="Downes M."/>
            <person name="Dugan-Rocha S."/>
            <person name="Dunkov B.C."/>
            <person name="Dunn P."/>
            <person name="Durbin K.J."/>
            <person name="Evangelista C.C."/>
            <person name="Ferraz C."/>
            <person name="Ferriera S."/>
            <person name="Fleischmann W."/>
            <person name="Fosler C."/>
            <person name="Gabrielian A.E."/>
            <person name="Garg N.S."/>
            <person name="Gelbart W.M."/>
            <person name="Glasser K."/>
            <person name="Glodek A."/>
            <person name="Gong F."/>
            <person name="Gorrell J.H."/>
            <person name="Gu Z."/>
            <person name="Guan P."/>
            <person name="Harris M."/>
            <person name="Harris N.L."/>
            <person name="Harvey D.A."/>
            <person name="Heiman T.J."/>
            <person name="Hernandez J.R."/>
            <person name="Houck J."/>
            <person name="Hostin D."/>
            <person name="Houston K.A."/>
            <person name="Howland T.J."/>
            <person name="Wei M.-H."/>
            <person name="Ibegwam C."/>
            <person name="Jalali M."/>
            <person name="Kalush F."/>
            <person name="Karpen G.H."/>
            <person name="Ke Z."/>
            <person name="Kennison J.A."/>
            <person name="Ketchum K.A."/>
            <person name="Kimmel B.E."/>
            <person name="Kodira C.D."/>
            <person name="Kraft C.L."/>
            <person name="Kravitz S."/>
            <person name="Kulp D."/>
            <person name="Lai Z."/>
            <person name="Lasko P."/>
            <person name="Lei Y."/>
            <person name="Levitsky A.A."/>
            <person name="Li J.H."/>
            <person name="Li Z."/>
            <person name="Liang Y."/>
            <person name="Lin X."/>
            <person name="Liu X."/>
            <person name="Mattei B."/>
            <person name="McIntosh T.C."/>
            <person name="McLeod M.P."/>
            <person name="McPherson D."/>
            <person name="Merkulov G."/>
            <person name="Milshina N.V."/>
            <person name="Mobarry C."/>
            <person name="Morris J."/>
            <person name="Moshrefi A."/>
            <person name="Mount S.M."/>
            <person name="Moy M."/>
            <person name="Murphy B."/>
            <person name="Murphy L."/>
            <person name="Muzny D.M."/>
            <person name="Nelson D.L."/>
            <person name="Nelson D.R."/>
            <person name="Nelson K.A."/>
            <person name="Nixon K."/>
            <person name="Nusskern D.R."/>
            <person name="Pacleb J.M."/>
            <person name="Palazzolo M."/>
            <person name="Pittman G.S."/>
            <person name="Pan S."/>
            <person name="Pollard J."/>
            <person name="Puri V."/>
            <person name="Reese M.G."/>
            <person name="Reinert K."/>
            <person name="Remington K."/>
            <person name="Saunders R.D.C."/>
            <person name="Scheeler F."/>
            <person name="Shen H."/>
            <person name="Shue B.C."/>
            <person name="Siden-Kiamos I."/>
            <person name="Simpson M."/>
            <person name="Skupski M.P."/>
            <person name="Smith T.J."/>
            <person name="Spier E."/>
            <person name="Spradling A.C."/>
            <person name="Stapleton M."/>
            <person name="Strong R."/>
            <person name="Sun E."/>
            <person name="Svirskas R."/>
            <person name="Tector C."/>
            <person name="Turner R."/>
            <person name="Venter E."/>
            <person name="Wang A.H."/>
            <person name="Wang X."/>
            <person name="Wang Z.-Y."/>
            <person name="Wassarman D.A."/>
            <person name="Weinstock G.M."/>
            <person name="Weissenbach J."/>
            <person name="Williams S.M."/>
            <person name="Woodage T."/>
            <person name="Worley K.C."/>
            <person name="Wu D."/>
            <person name="Yang S."/>
            <person name="Yao Q.A."/>
            <person name="Ye J."/>
            <person name="Yeh R.-F."/>
            <person name="Zaveri J.S."/>
            <person name="Zhan M."/>
            <person name="Zhang G."/>
            <person name="Zhao Q."/>
            <person name="Zheng L."/>
            <person name="Zheng X.H."/>
            <person name="Zhong F.N."/>
            <person name="Zhong W."/>
            <person name="Zhou X."/>
            <person name="Zhu S.C."/>
            <person name="Zhu X."/>
            <person name="Smith H.O."/>
            <person name="Gibbs R.A."/>
            <person name="Myers E.W."/>
            <person name="Rubin G.M."/>
            <person name="Venter J.C."/>
        </authorList>
    </citation>
    <scope>NUCLEOTIDE SEQUENCE [LARGE SCALE GENOMIC DNA]</scope>
    <source>
        <strain>Berkeley</strain>
    </source>
</reference>
<reference key="2">
    <citation type="journal article" date="2002" name="Genome Biol.">
        <title>Annotation of the Drosophila melanogaster euchromatic genome: a systematic review.</title>
        <authorList>
            <person name="Misra S."/>
            <person name="Crosby M.A."/>
            <person name="Mungall C.J."/>
            <person name="Matthews B.B."/>
            <person name="Campbell K.S."/>
            <person name="Hradecky P."/>
            <person name="Huang Y."/>
            <person name="Kaminker J.S."/>
            <person name="Millburn G.H."/>
            <person name="Prochnik S.E."/>
            <person name="Smith C.D."/>
            <person name="Tupy J.L."/>
            <person name="Whitfield E.J."/>
            <person name="Bayraktaroglu L."/>
            <person name="Berman B.P."/>
            <person name="Bettencourt B.R."/>
            <person name="Celniker S.E."/>
            <person name="de Grey A.D.N.J."/>
            <person name="Drysdale R.A."/>
            <person name="Harris N.L."/>
            <person name="Richter J."/>
            <person name="Russo S."/>
            <person name="Schroeder A.J."/>
            <person name="Shu S.Q."/>
            <person name="Stapleton M."/>
            <person name="Yamada C."/>
            <person name="Ashburner M."/>
            <person name="Gelbart W.M."/>
            <person name="Rubin G.M."/>
            <person name="Lewis S.E."/>
        </authorList>
    </citation>
    <scope>GENOME REANNOTATION</scope>
    <source>
        <strain>Berkeley</strain>
    </source>
</reference>
<reference key="3">
    <citation type="journal article" date="2002" name="Genome Biol.">
        <title>A Drosophila full-length cDNA resource.</title>
        <authorList>
            <person name="Stapleton M."/>
            <person name="Carlson J.W."/>
            <person name="Brokstein P."/>
            <person name="Yu C."/>
            <person name="Champe M."/>
            <person name="George R.A."/>
            <person name="Guarin H."/>
            <person name="Kronmiller B."/>
            <person name="Pacleb J.M."/>
            <person name="Park S."/>
            <person name="Wan K.H."/>
            <person name="Rubin G.M."/>
            <person name="Celniker S.E."/>
        </authorList>
    </citation>
    <scope>NUCLEOTIDE SEQUENCE [LARGE SCALE MRNA]</scope>
    <source>
        <strain>Berkeley</strain>
        <tissue>Embryo</tissue>
    </source>
</reference>
<protein>
    <recommendedName>
        <fullName>U6 small nuclear RNA (adenine-(43)-N(6))-methyltransferase</fullName>
        <ecNumber evidence="1 2">2.1.1.346</ecNumber>
    </recommendedName>
</protein>